<protein>
    <recommendedName>
        <fullName evidence="1">Recombination protein RecR</fullName>
    </recommendedName>
</protein>
<reference key="1">
    <citation type="journal article" date="2003" name="Genome Res.">
        <title>Genome sequence of an M3 strain of Streptococcus pyogenes reveals a large-scale genomic rearrangement in invasive strains and new insights into phage evolution.</title>
        <authorList>
            <person name="Nakagawa I."/>
            <person name="Kurokawa K."/>
            <person name="Yamashita A."/>
            <person name="Nakata M."/>
            <person name="Tomiyasu Y."/>
            <person name="Okahashi N."/>
            <person name="Kawabata S."/>
            <person name="Yamazaki K."/>
            <person name="Shiba T."/>
            <person name="Yasunaga T."/>
            <person name="Hayashi H."/>
            <person name="Hattori M."/>
            <person name="Hamada S."/>
        </authorList>
    </citation>
    <scope>NUCLEOTIDE SEQUENCE [LARGE SCALE GENOMIC DNA]</scope>
    <source>
        <strain>SSI-1</strain>
    </source>
</reference>
<gene>
    <name evidence="1" type="primary">recR</name>
    <name type="ordered locus">SPs0779</name>
</gene>
<comment type="function">
    <text evidence="1">May play a role in DNA repair. It seems to be involved in an RecBC-independent recombinational process of DNA repair. It may act with RecF and RecO.</text>
</comment>
<comment type="similarity">
    <text evidence="1">Belongs to the RecR family.</text>
</comment>
<comment type="sequence caution" evidence="2">
    <conflict type="erroneous initiation">
        <sequence resource="EMBL-CDS" id="BAC63874"/>
    </conflict>
</comment>
<sequence length="198" mass="21645">MLYPTPIAKLIDSYSKLPGIGIKTATRLAFYTIGMSNEDVNDFAKNLLAAKRELTYCSICGNLTDDDPCHICTDTSRDQTTILVVEDAKDVSAMEKIQEYHGYYHVLHGLISPMNGVGPDDINLKSLITRLMDGKVSEVIVATNATADGEATSMYISRVLKPAGIKVTRLARGLAVGSDIEYADEVTLLRAIENRTEL</sequence>
<feature type="chain" id="PRO_0000411484" description="Recombination protein RecR">
    <location>
        <begin position="1"/>
        <end position="198"/>
    </location>
</feature>
<feature type="domain" description="Toprim" evidence="1">
    <location>
        <begin position="80"/>
        <end position="175"/>
    </location>
</feature>
<feature type="zinc finger region" description="C4-type" evidence="1">
    <location>
        <begin position="57"/>
        <end position="72"/>
    </location>
</feature>
<dbReference type="EMBL" id="BA000034">
    <property type="protein sequence ID" value="BAC63874.1"/>
    <property type="status" value="ALT_INIT"/>
    <property type="molecule type" value="Genomic_DNA"/>
</dbReference>
<dbReference type="RefSeq" id="WP_002983939.1">
    <property type="nucleotide sequence ID" value="NC_004606.1"/>
</dbReference>
<dbReference type="SMR" id="P0DD89"/>
<dbReference type="GeneID" id="69900624"/>
<dbReference type="KEGG" id="sps:SPs0779"/>
<dbReference type="HOGENOM" id="CLU_060739_1_0_9"/>
<dbReference type="GO" id="GO:0003677">
    <property type="term" value="F:DNA binding"/>
    <property type="evidence" value="ECO:0007669"/>
    <property type="project" value="UniProtKB-UniRule"/>
</dbReference>
<dbReference type="GO" id="GO:0008270">
    <property type="term" value="F:zinc ion binding"/>
    <property type="evidence" value="ECO:0007669"/>
    <property type="project" value="UniProtKB-KW"/>
</dbReference>
<dbReference type="GO" id="GO:0006310">
    <property type="term" value="P:DNA recombination"/>
    <property type="evidence" value="ECO:0007669"/>
    <property type="project" value="UniProtKB-UniRule"/>
</dbReference>
<dbReference type="GO" id="GO:0006281">
    <property type="term" value="P:DNA repair"/>
    <property type="evidence" value="ECO:0007669"/>
    <property type="project" value="UniProtKB-UniRule"/>
</dbReference>
<dbReference type="CDD" id="cd01025">
    <property type="entry name" value="TOPRIM_recR"/>
    <property type="match status" value="1"/>
</dbReference>
<dbReference type="Gene3D" id="3.30.60.80">
    <property type="match status" value="1"/>
</dbReference>
<dbReference type="Gene3D" id="3.40.1360.10">
    <property type="match status" value="1"/>
</dbReference>
<dbReference type="Gene3D" id="6.10.250.240">
    <property type="match status" value="1"/>
</dbReference>
<dbReference type="Gene3D" id="1.10.8.420">
    <property type="entry name" value="RecR Domain 1"/>
    <property type="match status" value="1"/>
</dbReference>
<dbReference type="HAMAP" id="MF_00017">
    <property type="entry name" value="RecR"/>
    <property type="match status" value="1"/>
</dbReference>
<dbReference type="InterPro" id="IPR000093">
    <property type="entry name" value="DNA_Rcmb_RecR"/>
</dbReference>
<dbReference type="InterPro" id="IPR023627">
    <property type="entry name" value="Rcmb_RecR"/>
</dbReference>
<dbReference type="InterPro" id="IPR015967">
    <property type="entry name" value="Rcmb_RecR_Znf"/>
</dbReference>
<dbReference type="InterPro" id="IPR006171">
    <property type="entry name" value="TOPRIM_dom"/>
</dbReference>
<dbReference type="InterPro" id="IPR034137">
    <property type="entry name" value="TOPRIM_RecR"/>
</dbReference>
<dbReference type="NCBIfam" id="TIGR00615">
    <property type="entry name" value="recR"/>
    <property type="match status" value="1"/>
</dbReference>
<dbReference type="PANTHER" id="PTHR30446">
    <property type="entry name" value="RECOMBINATION PROTEIN RECR"/>
    <property type="match status" value="1"/>
</dbReference>
<dbReference type="PANTHER" id="PTHR30446:SF0">
    <property type="entry name" value="RECOMBINATION PROTEIN RECR"/>
    <property type="match status" value="1"/>
</dbReference>
<dbReference type="Pfam" id="PF21175">
    <property type="entry name" value="RecR_C"/>
    <property type="match status" value="1"/>
</dbReference>
<dbReference type="Pfam" id="PF21176">
    <property type="entry name" value="RecR_HhH"/>
    <property type="match status" value="1"/>
</dbReference>
<dbReference type="Pfam" id="PF02132">
    <property type="entry name" value="RecR_ZnF"/>
    <property type="match status" value="1"/>
</dbReference>
<dbReference type="Pfam" id="PF13662">
    <property type="entry name" value="Toprim_4"/>
    <property type="match status" value="1"/>
</dbReference>
<dbReference type="SMART" id="SM00493">
    <property type="entry name" value="TOPRIM"/>
    <property type="match status" value="1"/>
</dbReference>
<dbReference type="SUPFAM" id="SSF111304">
    <property type="entry name" value="Recombination protein RecR"/>
    <property type="match status" value="1"/>
</dbReference>
<dbReference type="PROSITE" id="PS01300">
    <property type="entry name" value="RECR"/>
    <property type="match status" value="1"/>
</dbReference>
<dbReference type="PROSITE" id="PS50880">
    <property type="entry name" value="TOPRIM"/>
    <property type="match status" value="1"/>
</dbReference>
<evidence type="ECO:0000255" key="1">
    <source>
        <dbReference type="HAMAP-Rule" id="MF_00017"/>
    </source>
</evidence>
<evidence type="ECO:0000305" key="2"/>
<proteinExistence type="inferred from homology"/>
<organism>
    <name type="scientific">Streptococcus pyogenes serotype M3 (strain SSI-1)</name>
    <dbReference type="NCBI Taxonomy" id="193567"/>
    <lineage>
        <taxon>Bacteria</taxon>
        <taxon>Bacillati</taxon>
        <taxon>Bacillota</taxon>
        <taxon>Bacilli</taxon>
        <taxon>Lactobacillales</taxon>
        <taxon>Streptococcaceae</taxon>
        <taxon>Streptococcus</taxon>
    </lineage>
</organism>
<accession>P0DD89</accession>
<accession>P65995</accession>
<accession>Q99Z33</accession>
<keyword id="KW-0227">DNA damage</keyword>
<keyword id="KW-0233">DNA recombination</keyword>
<keyword id="KW-0234">DNA repair</keyword>
<keyword id="KW-0479">Metal-binding</keyword>
<keyword id="KW-0862">Zinc</keyword>
<keyword id="KW-0863">Zinc-finger</keyword>
<name>RECR_STRPQ</name>